<feature type="chain" id="PRO_0000444343" description="Aspartate kinase-like protein lolA1">
    <location>
        <begin position="1"/>
        <end position="209"/>
    </location>
</feature>
<feature type="region of interest" description="Disordered" evidence="1">
    <location>
        <begin position="1"/>
        <end position="27"/>
    </location>
</feature>
<feature type="compositionally biased region" description="Basic and acidic residues" evidence="1">
    <location>
        <begin position="1"/>
        <end position="11"/>
    </location>
</feature>
<feature type="compositionally biased region" description="Polar residues" evidence="1">
    <location>
        <begin position="12"/>
        <end position="27"/>
    </location>
</feature>
<evidence type="ECO:0000256" key="1">
    <source>
        <dbReference type="SAM" id="MobiDB-lite"/>
    </source>
</evidence>
<evidence type="ECO:0000269" key="2">
    <source>
    </source>
</evidence>
<evidence type="ECO:0000269" key="3">
    <source>
    </source>
</evidence>
<evidence type="ECO:0000269" key="4">
    <source>
    </source>
</evidence>
<evidence type="ECO:0000269" key="5">
    <source>
    </source>
</evidence>
<evidence type="ECO:0000269" key="6">
    <source>
    </source>
</evidence>
<evidence type="ECO:0000269" key="7">
    <source>
    </source>
</evidence>
<evidence type="ECO:0000269" key="8">
    <source>
    </source>
</evidence>
<evidence type="ECO:0000303" key="9">
    <source>
    </source>
</evidence>
<evidence type="ECO:0000303" key="10">
    <source>
    </source>
</evidence>
<evidence type="ECO:0000305" key="11"/>
<evidence type="ECO:0000305" key="12">
    <source>
    </source>
</evidence>
<evidence type="ECO:0000305" key="13">
    <source>
    </source>
</evidence>
<reference key="1">
    <citation type="journal article" date="2002" name="Fungal Genet. Biol.">
        <title>Expressed sequence tags and genes associated with loline alkaloid expression by the fungal endophyte Neotyphodium uncinatum.</title>
        <authorList>
            <person name="Spiering M.J."/>
            <person name="Wilkinson H.H."/>
            <person name="Blankenship J.D."/>
            <person name="Schardl C.L."/>
        </authorList>
    </citation>
    <scope>NUCLEOTIDE SEQUENCE [MRNA]</scope>
    <source>
        <strain>CBS 102646</strain>
        <strain>E167</strain>
    </source>
</reference>
<reference key="2">
    <citation type="journal article" date="2005" name="Genetics">
        <title>Gene clusters for insecticidal loline alkaloids in the grass-endophytic fungus Neotyphodium uncinatum.</title>
        <authorList>
            <person name="Spiering M.J."/>
            <person name="Moon C.D."/>
            <person name="Wilkinson H.H."/>
            <person name="Schardl C.L."/>
        </authorList>
    </citation>
    <scope>NUCLEOTIDE SEQUENCE [GENOMIC DNA]</scope>
    <scope>INDUCTION</scope>
    <scope>FUNCTION</scope>
    <source>
        <strain>CBS 102646</strain>
    </source>
</reference>
<reference key="3">
    <citation type="journal article" date="2005" name="ChemBioChem">
        <title>Biosynthetic precursors of fungal pyrrolizidines, the loline alkaloids.</title>
        <authorList>
            <person name="Blankenship J.D."/>
            <person name="Houseknecht J.B."/>
            <person name="Pal S."/>
            <person name="Bush L.P."/>
            <person name="Grossman R.B."/>
            <person name="Schardl C.L."/>
        </authorList>
    </citation>
    <scope>FUNCTION</scope>
</reference>
<reference key="4">
    <citation type="journal article" date="2006" name="ChemBioChem">
        <title>On the sequence of bond formation in loline alkaloid biosynthesis.</title>
        <authorList>
            <person name="Faulkner J.R."/>
            <person name="Hussaini S.R."/>
            <person name="Blankenship J.D."/>
            <person name="Pal S."/>
            <person name="Branan B.M."/>
            <person name="Grossman R.B."/>
            <person name="Schardl C.L."/>
        </authorList>
    </citation>
    <scope>FUNCTION</scope>
</reference>
<reference key="5">
    <citation type="journal article" date="2008" name="Fungal Genet. Biol.">
        <title>Role of the LolP cytochrome P450 monooxygenase in loline alkaloid biosynthesis.</title>
        <authorList>
            <person name="Spiering M.J."/>
            <person name="Faulkner J.R."/>
            <person name="Zhang D.X."/>
            <person name="Machado C."/>
            <person name="Grossman R.B."/>
            <person name="Schardl C.L."/>
        </authorList>
    </citation>
    <scope>FUNCTION</scope>
    <source>
        <strain>CBS 102646</strain>
    </source>
</reference>
<reference key="6">
    <citation type="journal article" date="2014" name="Phytochemistry">
        <title>Ether bridge formation in loline alkaloid biosynthesis.</title>
        <authorList>
            <person name="Pan J."/>
            <person name="Bhardwaj M."/>
            <person name="Faulkner J.R."/>
            <person name="Nagabhyru P."/>
            <person name="Charlton N.D."/>
            <person name="Higashi R.M."/>
            <person name="Miller A.F."/>
            <person name="Young C.A."/>
            <person name="Grossman R.B."/>
            <person name="Schardl C.L."/>
        </authorList>
    </citation>
    <scope>FUNCTION</scope>
</reference>
<reference key="7">
    <citation type="journal article" date="2014" name="PLoS ONE">
        <title>Enzymes from fungal and plant origin required for chemical diversification of insecticidal loline alkaloids in grass-Epichloe symbiota.</title>
        <authorList>
            <person name="Pan J."/>
            <person name="Bhardwaj M."/>
            <person name="Nagabhyru P."/>
            <person name="Grossman R.B."/>
            <person name="Schardl C.L."/>
        </authorList>
    </citation>
    <scope>FUNCTION</scope>
    <scope>BIOTECHNOLOGY</scope>
</reference>
<reference key="8">
    <citation type="journal article" date="2018" name="Biochemistry">
        <title>Installation of the ether bridge of lolines by the iron- and 2-oxoglutarate-dependent oxygenase, lolO: regio- and stereochemistry of sequential hydroxylation and oxacyclization reactions.</title>
        <authorList>
            <person name="Pan J."/>
            <person name="Bhardwaj M."/>
            <person name="Zhang B."/>
            <person name="Chang W.C."/>
            <person name="Schardl C.L."/>
            <person name="Krebs C."/>
            <person name="Grossman R.B."/>
            <person name="Bollinger J.M. Jr."/>
        </authorList>
    </citation>
    <scope>FUNCTION</scope>
</reference>
<gene>
    <name evidence="10" type="primary">lolA1</name>
    <name evidence="9" type="synonym">lolA</name>
</gene>
<sequence length="209" mass="23191">MLDESPMRKGDSVSNDQSNPESNASVSIHQQNQIITCVSPGPVCPNAIEIKRDIVIVRLRPVESCPGYRFFRRVFETLEKWQLQVDMFSTSLGRITLALGAAALQAGISDSCSARNDMMSRDLMHGMQKLLPDDHIELFPHMAIISVVGHPSRRMAGHIFATMDANDIPTVMISHDAARLGIACAISEQYTAKALCVFEQCLFRYSLTH</sequence>
<name>LOLA1_EPIUN</name>
<accession>Q7LML9</accession>
<protein>
    <recommendedName>
        <fullName evidence="10">Aspartate kinase-like protein lolA1</fullName>
    </recommendedName>
    <alternativeName>
        <fullName evidence="10">Loline biosynthesis cluster 1 protein A</fullName>
    </alternativeName>
</protein>
<dbReference type="EMBL" id="AF439395">
    <property type="protein sequence ID" value="AAN32827.1"/>
    <property type="molecule type" value="mRNA"/>
</dbReference>
<dbReference type="EMBL" id="AY723749">
    <property type="protein sequence ID" value="AAV68706.1"/>
    <property type="molecule type" value="Genomic_DNA"/>
</dbReference>
<dbReference type="SMR" id="Q7LML9"/>
<dbReference type="GO" id="GO:0005829">
    <property type="term" value="C:cytosol"/>
    <property type="evidence" value="ECO:0007669"/>
    <property type="project" value="TreeGrafter"/>
</dbReference>
<dbReference type="GO" id="GO:0004072">
    <property type="term" value="F:aspartate kinase activity"/>
    <property type="evidence" value="ECO:0007669"/>
    <property type="project" value="TreeGrafter"/>
</dbReference>
<dbReference type="GO" id="GO:0009820">
    <property type="term" value="P:alkaloid metabolic process"/>
    <property type="evidence" value="ECO:0007669"/>
    <property type="project" value="UniProtKB-KW"/>
</dbReference>
<dbReference type="GO" id="GO:0009090">
    <property type="term" value="P:homoserine biosynthetic process"/>
    <property type="evidence" value="ECO:0007669"/>
    <property type="project" value="TreeGrafter"/>
</dbReference>
<dbReference type="GO" id="GO:0009089">
    <property type="term" value="P:lysine biosynthetic process via diaminopimelate"/>
    <property type="evidence" value="ECO:0007669"/>
    <property type="project" value="TreeGrafter"/>
</dbReference>
<dbReference type="CDD" id="cd04892">
    <property type="entry name" value="ACT_AK-like_2"/>
    <property type="match status" value="1"/>
</dbReference>
<dbReference type="Gene3D" id="3.30.2130.10">
    <property type="entry name" value="VC0802-like"/>
    <property type="match status" value="1"/>
</dbReference>
<dbReference type="InterPro" id="IPR045865">
    <property type="entry name" value="ACT-like_dom_sf"/>
</dbReference>
<dbReference type="PANTHER" id="PTHR21499">
    <property type="entry name" value="ASPARTATE KINASE"/>
    <property type="match status" value="1"/>
</dbReference>
<dbReference type="PANTHER" id="PTHR21499:SF59">
    <property type="entry name" value="ASPARTOKINASE"/>
    <property type="match status" value="1"/>
</dbReference>
<dbReference type="SUPFAM" id="SSF55021">
    <property type="entry name" value="ACT-like"/>
    <property type="match status" value="2"/>
</dbReference>
<keyword id="KW-0017">Alkaloid metabolism</keyword>
<comment type="function">
    <text evidence="2 3 4 5 6 7 8">Aspartokinase-like protein; part of the gene cluster that mediates the biosynthesis of loline alkaloids, potent insecticidal agents composed of a pyrrolizidine ring system and an uncommon ether bridge linking carbons 2 and 7 (PubMed:15654104). Lolines are structurally differentiated by the various modifications of the L-amino group and include norloline, loline, N-methylloline, N-acetylloline, N-acetylnorloline, and N-formylloline (PubMed:15861432, PubMed:25531527). The first committed step is the condensation of O-acetyl-L-homoserine (derived from L-aspartic acid) and L-proline, probably catalyzed by the gamma-type pyridoxal 5'-phosphate(PLP)-dependent enzyme lolC, to give the diamino diacid, NACPP (PubMed:15861432, PubMed:16755627). Ensuing cyclization, decarboxylation, and acetylation steps yield 1-exo-acetamidopyrrolizidine (AcAP) (PubMed:24374065). LolO is required for installation of the ether bridge upon the pathway intermediate, 1-exo-acetamidopyrrolizidine (AcAP) (PubMed:29537853). In sequential 2-oxoglutarate- and O(2)-consuming steps, lolO removes hydrogens from C2 and C7 of AcAP to form both carbon-oxygen bonds in N-acetylnorloline (NANL), the precursor to all other lolines (PubMed:24374065, PubMed:29537853). The enzymes lolD, lolE, lolF and lolT have also been proposed to be involved in the ether-bridge installation (PubMed:15654104). Further processing of the exocyclic moiety of NANL by fungal N-acetamidase (LolN), methyltransferase (LolM), and cytochrome P450 (LolP) enzymes, with occasional involvement of a plant acetyltransferase, generates the other known lolines (PubMed:18655839, PubMed:25531527). LolN transforms NANL to norlonine which is monomethylated and dimethylated to respectively lonine and N-methyllonine (NML) by lolM (PubMed:25531527). LolP catalyzes hydroxylation of the methyl group in N-methylloline (NML) and further oxygenation to N-formylloline (NFL) (PubMed:18655839). A plant acetyltransferase is responsible for the acetylation of loline to form N-acetylloline (NAL) (PubMed:25531527). LolA might interact with aspartate kinase to prevent feedback inhibition of its activity by these end products and thereby promote production of L-homoserine from L-aspartate (PubMed:15654104).</text>
</comment>
<comment type="pathway">
    <text evidence="12">Alkaloid biosynthesis.</text>
</comment>
<comment type="induction">
    <text evidence="2">Expression is induced in loline alkaloid-producing cultures as well as in planta (PubMed:15654104).</text>
</comment>
<comment type="biotechnology">
    <text evidence="13">Loline alkaloids show broad-spectrum anti-insect activity, and different lolines may have different biological activities (PubMed:25531527). In vitro tests of NFL, NAL, NML, and semisynthetic loline derivatives with long carbon-chain acylations on the 1-amine have shown that many are effective against both fall armyworm larvae and European corn borer larvae, but the effects seem to differ depending on the modifications (PubMed:25531527). N-Formylloline reduces the weight gain of fall armyworms by deterring feeding, and does not significantly affect corn borers (PubMed:25531527). In contrast, NAL reduces the weight gain of corn borer larvae without changing larval feeding behavior, indicating that its effect is due to metabolic toxicity. N-formylloline, NAL, and NML are almost as potent as nicotine in insecticidal activity against green bugs (PubMed:25531527).</text>
</comment>
<comment type="similarity">
    <text evidence="11">Belongs to the aspartokinase family.</text>
</comment>
<comment type="caution">
    <text evidence="12">LolA1 has similarity only to the C-terminal domain of aspartate kinases, excluding the kinase active site (PubMed:15654104).</text>
</comment>
<proteinExistence type="evidence at transcript level"/>
<organism>
    <name type="scientific">Epichloe uncinata</name>
    <name type="common">Endophyte fungus</name>
    <name type="synonym">Neotyphodium uncinatum</name>
    <dbReference type="NCBI Taxonomy" id="5050"/>
    <lineage>
        <taxon>Eukaryota</taxon>
        <taxon>Fungi</taxon>
        <taxon>Dikarya</taxon>
        <taxon>Ascomycota</taxon>
        <taxon>Pezizomycotina</taxon>
        <taxon>Sordariomycetes</taxon>
        <taxon>Hypocreomycetidae</taxon>
        <taxon>Hypocreales</taxon>
        <taxon>Clavicipitaceae</taxon>
        <taxon>Epichloe</taxon>
    </lineage>
</organism>